<feature type="chain" id="PRO_0000279608" description="RNA-directed RNA polymerase catalytic subunit">
    <location>
        <begin position="1"/>
        <end position="757"/>
    </location>
</feature>
<feature type="domain" description="RdRp catalytic" evidence="1">
    <location>
        <begin position="286"/>
        <end position="483"/>
    </location>
</feature>
<feature type="region of interest" description="Disordered" evidence="2">
    <location>
        <begin position="50"/>
        <end position="82"/>
    </location>
</feature>
<feature type="region of interest" description="Promoter-binding site" evidence="1">
    <location>
        <begin position="249"/>
        <end position="256"/>
    </location>
</feature>
<feature type="short sequence motif" description="Nuclear localization signal" evidence="1">
    <location>
        <begin position="187"/>
        <end position="195"/>
    </location>
</feature>
<feature type="short sequence motif" description="Nuclear localization signal" evidence="1">
    <location>
        <begin position="203"/>
        <end position="216"/>
    </location>
</feature>
<feature type="compositionally biased region" description="Polar residues" evidence="2">
    <location>
        <begin position="55"/>
        <end position="64"/>
    </location>
</feature>
<evidence type="ECO:0000255" key="1">
    <source>
        <dbReference type="HAMAP-Rule" id="MF_04065"/>
    </source>
</evidence>
<evidence type="ECO:0000256" key="2">
    <source>
        <dbReference type="SAM" id="MobiDB-lite"/>
    </source>
</evidence>
<protein>
    <recommendedName>
        <fullName evidence="1">RNA-directed RNA polymerase catalytic subunit</fullName>
        <ecNumber evidence="1">2.7.7.48</ecNumber>
    </recommendedName>
    <alternativeName>
        <fullName evidence="1">Polymerase basic protein 1</fullName>
        <shortName evidence="1">PB1</shortName>
    </alternativeName>
    <alternativeName>
        <fullName evidence="1">RNA-directed RNA polymerase subunit P1</fullName>
    </alternativeName>
</protein>
<organism>
    <name type="scientific">Influenza A virus (strain A/Memphis/110/1976 H3N2)</name>
    <dbReference type="NCBI Taxonomy" id="383581"/>
    <lineage>
        <taxon>Viruses</taxon>
        <taxon>Riboviria</taxon>
        <taxon>Orthornavirae</taxon>
        <taxon>Negarnaviricota</taxon>
        <taxon>Polyploviricotina</taxon>
        <taxon>Insthoviricetes</taxon>
        <taxon>Articulavirales</taxon>
        <taxon>Orthomyxoviridae</taxon>
        <taxon>Alphainfluenzavirus</taxon>
        <taxon>Alphainfluenzavirus influenzae</taxon>
        <taxon>Influenza A virus</taxon>
    </lineage>
</organism>
<gene>
    <name evidence="1" type="primary">PB1</name>
</gene>
<proteinExistence type="inferred from homology"/>
<reference key="1">
    <citation type="submission" date="2005-12" db="EMBL/GenBank/DDBJ databases">
        <title>The NIAID influenza genome sequencing project.</title>
        <authorList>
            <person name="Ghedin E."/>
            <person name="Spiro D."/>
            <person name="Miller N."/>
            <person name="Zaborsky J."/>
            <person name="Feldblyum T."/>
            <person name="Subbu V."/>
            <person name="Shumway M."/>
            <person name="Sparenborg J."/>
            <person name="Groveman L."/>
            <person name="Halpin R."/>
            <person name="Sitz J."/>
            <person name="Koo H."/>
            <person name="Salzberg S.L."/>
            <person name="Webster R.G."/>
            <person name="Hoffmann E."/>
            <person name="Krauss S."/>
            <person name="Naeve C."/>
            <person name="Bao Y."/>
            <person name="Bolotov P."/>
            <person name="Dernovoy D."/>
            <person name="Kiryutin B."/>
            <person name="Lipman D.J."/>
            <person name="Tatusova T."/>
        </authorList>
    </citation>
    <scope>NUCLEOTIDE SEQUENCE [GENOMIC RNA]</scope>
</reference>
<accession>Q2RF98</accession>
<name>RDRP_I76A6</name>
<keyword id="KW-1262">Eukaryotic host gene expression shutoff by virus</keyword>
<keyword id="KW-1191">Eukaryotic host transcription shutoff by virus</keyword>
<keyword id="KW-1035">Host cytoplasm</keyword>
<keyword id="KW-1190">Host gene expression shutoff by virus</keyword>
<keyword id="KW-1048">Host nucleus</keyword>
<keyword id="KW-0945">Host-virus interaction</keyword>
<keyword id="KW-1104">Inhibition of host RNA polymerase II by virus</keyword>
<keyword id="KW-0547">Nucleotide-binding</keyword>
<keyword id="KW-0548">Nucleotidyltransferase</keyword>
<keyword id="KW-0597">Phosphoprotein</keyword>
<keyword id="KW-0696">RNA-directed RNA polymerase</keyword>
<keyword id="KW-0808">Transferase</keyword>
<keyword id="KW-0693">Viral RNA replication</keyword>
<keyword id="KW-1195">Viral transcription</keyword>
<organismHost>
    <name type="scientific">Aves</name>
    <dbReference type="NCBI Taxonomy" id="8782"/>
</organismHost>
<organismHost>
    <name type="scientific">Cetacea</name>
    <name type="common">whales</name>
    <dbReference type="NCBI Taxonomy" id="9721"/>
</organismHost>
<organismHost>
    <name type="scientific">Homo sapiens</name>
    <name type="common">Human</name>
    <dbReference type="NCBI Taxonomy" id="9606"/>
</organismHost>
<organismHost>
    <name type="scientific">Phocidae</name>
    <name type="common">true seals</name>
    <dbReference type="NCBI Taxonomy" id="9709"/>
</organismHost>
<organismHost>
    <name type="scientific">Sus scrofa</name>
    <name type="common">Pig</name>
    <dbReference type="NCBI Taxonomy" id="9823"/>
</organismHost>
<dbReference type="EC" id="2.7.7.48" evidence="1"/>
<dbReference type="EMBL" id="CY006841">
    <property type="protein sequence ID" value="ABC02274.1"/>
    <property type="molecule type" value="Genomic_RNA"/>
</dbReference>
<dbReference type="SMR" id="Q2RF98"/>
<dbReference type="Proteomes" id="UP000007792">
    <property type="component" value="Genome"/>
</dbReference>
<dbReference type="GO" id="GO:0030430">
    <property type="term" value="C:host cell cytoplasm"/>
    <property type="evidence" value="ECO:0007669"/>
    <property type="project" value="UniProtKB-SubCell"/>
</dbReference>
<dbReference type="GO" id="GO:0042025">
    <property type="term" value="C:host cell nucleus"/>
    <property type="evidence" value="ECO:0007669"/>
    <property type="project" value="UniProtKB-SubCell"/>
</dbReference>
<dbReference type="GO" id="GO:0000166">
    <property type="term" value="F:nucleotide binding"/>
    <property type="evidence" value="ECO:0007669"/>
    <property type="project" value="UniProtKB-UniRule"/>
</dbReference>
<dbReference type="GO" id="GO:0003723">
    <property type="term" value="F:RNA binding"/>
    <property type="evidence" value="ECO:0007669"/>
    <property type="project" value="InterPro"/>
</dbReference>
<dbReference type="GO" id="GO:0003968">
    <property type="term" value="F:RNA-directed RNA polymerase activity"/>
    <property type="evidence" value="ECO:0007669"/>
    <property type="project" value="UniProtKB-UniRule"/>
</dbReference>
<dbReference type="GO" id="GO:0006351">
    <property type="term" value="P:DNA-templated transcription"/>
    <property type="evidence" value="ECO:0007669"/>
    <property type="project" value="UniProtKB-UniRule"/>
</dbReference>
<dbReference type="GO" id="GO:0039657">
    <property type="term" value="P:symbiont-mediated suppression of host gene expression"/>
    <property type="evidence" value="ECO:0007669"/>
    <property type="project" value="UniProtKB-KW"/>
</dbReference>
<dbReference type="GO" id="GO:0039523">
    <property type="term" value="P:symbiont-mediated suppression of host mRNA transcription via inhibition of RNA polymerase II activity"/>
    <property type="evidence" value="ECO:0007669"/>
    <property type="project" value="UniProtKB-UniRule"/>
</dbReference>
<dbReference type="GO" id="GO:0039694">
    <property type="term" value="P:viral RNA genome replication"/>
    <property type="evidence" value="ECO:0007669"/>
    <property type="project" value="UniProtKB-UniRule"/>
</dbReference>
<dbReference type="GO" id="GO:0019083">
    <property type="term" value="P:viral transcription"/>
    <property type="evidence" value="ECO:0007669"/>
    <property type="project" value="UniProtKB-KW"/>
</dbReference>
<dbReference type="Gene3D" id="6.10.140.720">
    <property type="match status" value="1"/>
</dbReference>
<dbReference type="HAMAP" id="MF_04065">
    <property type="entry name" value="INFV_RDRP"/>
    <property type="match status" value="1"/>
</dbReference>
<dbReference type="InterPro" id="IPR007099">
    <property type="entry name" value="RNA-dir_pol_NSvirus"/>
</dbReference>
<dbReference type="InterPro" id="IPR001407">
    <property type="entry name" value="RNA_pol_PB1_influenza"/>
</dbReference>
<dbReference type="Pfam" id="PF00602">
    <property type="entry name" value="Flu_PB1"/>
    <property type="match status" value="1"/>
</dbReference>
<dbReference type="PIRSF" id="PIRSF000827">
    <property type="entry name" value="RdRPol_OMV"/>
    <property type="match status" value="1"/>
</dbReference>
<dbReference type="PROSITE" id="PS50525">
    <property type="entry name" value="RDRP_SSRNA_NEG_SEG"/>
    <property type="match status" value="1"/>
</dbReference>
<sequence>MDVNPTLLFLKVPAQNAISTTFPYTGDPPYSHGTGTGYTMDTVNRTHQYSEKGKWTTNTETGAPQLNPIDGPLPEDNEPSGYAQTDCVLEAMAFLEESHPGIFENSCLETMEVVQQTRVDKLTQGRQTYDWTLNRNQPAATALANTIEVFRSNGLTANESGRLIDFLKDVMESMDKEEMEITTHFQRKRRVRDNMTKKMVTQRTIGKKKQRVNKRSYLIRALTLNTMTKDAERGKLKRRAIATPGMQIRGFVYFVETLARSICEKLEQSGLPVGGNEKKAKLANVVRKMMTNSQDTELSFTITGDNTKWNENQNPRMFLAMITYITKNQPEWFRNILSIAPIMFSNKMARLGKGYMFESKRMKLRTQIPAEMLASIDLKYFNESTRKKIEKIRPLLIDGTASLSPGMMMGMFNMLSTVLGVSILNLGQKKYTKTTYWWDGLQSSDDFALIVNAPNHEGIQAGVDRFYRTCKLVGINMSKKKSYINRTGTFEFTSFFYRYGFVANFSMELPSFGVSGINESADMSIGVTVIKNNMINNDLGPATAQMALQLFIKDYRYTYRCHRGDTQIQTRRSFELKKLWEQTRSKAGLLVSDGGPNLYNIRNLHIPEVCLKWELMDEDYQGRLCNPLNPFVSHKEIESVNNAVIMPAHGPAKSMEYDAVATTHSWIPKRNRSILNTSQRGILEDEQMYQKCCNLFEKFFPSSSYRRPVGISSMVEAMVSRARIDARIDFESGRIKKEEFSEIMKICFTIEELRRQK</sequence>
<comment type="function">
    <text evidence="1">RNA-dependent RNA polymerase which is responsible for replication and transcription of virus RNA segments. The transcription of viral mRNAs occurs by a unique mechanism called cap-snatching. 5' methylated caps of cellular mRNAs are cleaved after 10-13 nucleotides by PA. In turn, these short capped RNAs are used as primers by PB1 for transcription of viral mRNAs. During virus replication, PB1 initiates RNA synthesis and copy vRNA into complementary RNA (cRNA) which in turn serves as a template for the production of more vRNAs.</text>
</comment>
<comment type="catalytic activity">
    <reaction evidence="1">
        <text>RNA(n) + a ribonucleoside 5'-triphosphate = RNA(n+1) + diphosphate</text>
        <dbReference type="Rhea" id="RHEA:21248"/>
        <dbReference type="Rhea" id="RHEA-COMP:14527"/>
        <dbReference type="Rhea" id="RHEA-COMP:17342"/>
        <dbReference type="ChEBI" id="CHEBI:33019"/>
        <dbReference type="ChEBI" id="CHEBI:61557"/>
        <dbReference type="ChEBI" id="CHEBI:140395"/>
        <dbReference type="EC" id="2.7.7.48"/>
    </reaction>
</comment>
<comment type="subunit">
    <text evidence="1">Influenza RNA polymerase is composed of three subunits: PB1, PB2 and PA. Interacts (via N-terminus) with PA (via C-terminus). Interacts (via C-terminus) with PB2 (via N-terminus); this interaction is essential for transcription initiation.</text>
</comment>
<comment type="subcellular location">
    <subcellularLocation>
        <location evidence="1">Host nucleus</location>
    </subcellularLocation>
    <subcellularLocation>
        <location evidence="1">Host cytoplasm</location>
    </subcellularLocation>
</comment>
<comment type="PTM">
    <text evidence="1">Phosphorylated by host PRKCA.</text>
</comment>
<comment type="similarity">
    <text evidence="1">Belongs to the influenza viruses polymerase PB1 family.</text>
</comment>